<reference key="1">
    <citation type="journal article" date="2007" name="Nat. Biotechnol.">
        <title>Genome sequencing and analysis of the versatile cell factory Aspergillus niger CBS 513.88.</title>
        <authorList>
            <person name="Pel H.J."/>
            <person name="de Winde J.H."/>
            <person name="Archer D.B."/>
            <person name="Dyer P.S."/>
            <person name="Hofmann G."/>
            <person name="Schaap P.J."/>
            <person name="Turner G."/>
            <person name="de Vries R.P."/>
            <person name="Albang R."/>
            <person name="Albermann K."/>
            <person name="Andersen M.R."/>
            <person name="Bendtsen J.D."/>
            <person name="Benen J.A.E."/>
            <person name="van den Berg M."/>
            <person name="Breestraat S."/>
            <person name="Caddick M.X."/>
            <person name="Contreras R."/>
            <person name="Cornell M."/>
            <person name="Coutinho P.M."/>
            <person name="Danchin E.G.J."/>
            <person name="Debets A.J.M."/>
            <person name="Dekker P."/>
            <person name="van Dijck P.W.M."/>
            <person name="van Dijk A."/>
            <person name="Dijkhuizen L."/>
            <person name="Driessen A.J.M."/>
            <person name="d'Enfert C."/>
            <person name="Geysens S."/>
            <person name="Goosen C."/>
            <person name="Groot G.S.P."/>
            <person name="de Groot P.W.J."/>
            <person name="Guillemette T."/>
            <person name="Henrissat B."/>
            <person name="Herweijer M."/>
            <person name="van den Hombergh J.P.T.W."/>
            <person name="van den Hondel C.A.M.J.J."/>
            <person name="van der Heijden R.T.J.M."/>
            <person name="van der Kaaij R.M."/>
            <person name="Klis F.M."/>
            <person name="Kools H.J."/>
            <person name="Kubicek C.P."/>
            <person name="van Kuyk P.A."/>
            <person name="Lauber J."/>
            <person name="Lu X."/>
            <person name="van der Maarel M.J.E.C."/>
            <person name="Meulenberg R."/>
            <person name="Menke H."/>
            <person name="Mortimer M.A."/>
            <person name="Nielsen J."/>
            <person name="Oliver S.G."/>
            <person name="Olsthoorn M."/>
            <person name="Pal K."/>
            <person name="van Peij N.N.M.E."/>
            <person name="Ram A.F.J."/>
            <person name="Rinas U."/>
            <person name="Roubos J.A."/>
            <person name="Sagt C.M.J."/>
            <person name="Schmoll M."/>
            <person name="Sun J."/>
            <person name="Ussery D."/>
            <person name="Varga J."/>
            <person name="Vervecken W."/>
            <person name="van de Vondervoort P.J.J."/>
            <person name="Wedler H."/>
            <person name="Woesten H.A.B."/>
            <person name="Zeng A.-P."/>
            <person name="van Ooyen A.J.J."/>
            <person name="Visser J."/>
            <person name="Stam H."/>
        </authorList>
    </citation>
    <scope>NUCLEOTIDE SEQUENCE [LARGE SCALE GENOMIC DNA]</scope>
    <source>
        <strain>ATCC MYA-4892 / CBS 513.88 / FGSC A1513</strain>
    </source>
</reference>
<sequence length="440" mass="49532">MSHEEDLIDYSDEELQTTDAAATTAAPASNGEAKKGDLTVSGGRPDKKGSYVGIHSTGFRDFLLKEELLRAITDCGFEHPSEVQQVCIPTAILNVDVLCQAKSGLGKTAVFVLTTLHQLEPVPGECSILVMCHTRELAYQIKNEYARFSKYLPDVKTAVFYGGTPIQKDVELLSNKESYPNIVVGTPGRLNALVRDKKLSLRNVKAFVLDECDKMLDQIDMRRDVQEIFRATPADKQVMMFSATLSQEIRPVCKKFMRNPLEVYVDDDTKLTLHGLQQYYIKLSEAEKNRKLNELLDSLEFNQVIIFVKSTLRANELDKLLRECNFPSIAVHSGVSQEERIKRYKEFKEFNKRICVATDVFGRGIDIERINLAINYDLPADADSYLHRVGRAGRFGTKGLSISFVSTEDDEKVLKDIEKRFEVALPEYPEGGVDSSTYMA</sequence>
<comment type="function">
    <text evidence="1">ATP-binding RNA helicase involved in transcription elongation and required for the export of mRNA out of the nucleus. SUB2 also plays a role in pre-mRNA splicing and spliceosome assembly. May be involved in rDNA and telomeric silencing, and maintenance of genome integrity (By similarity).</text>
</comment>
<comment type="catalytic activity">
    <reaction>
        <text>ATP + H2O = ADP + phosphate + H(+)</text>
        <dbReference type="Rhea" id="RHEA:13065"/>
        <dbReference type="ChEBI" id="CHEBI:15377"/>
        <dbReference type="ChEBI" id="CHEBI:15378"/>
        <dbReference type="ChEBI" id="CHEBI:30616"/>
        <dbReference type="ChEBI" id="CHEBI:43474"/>
        <dbReference type="ChEBI" id="CHEBI:456216"/>
        <dbReference type="EC" id="3.6.4.13"/>
    </reaction>
</comment>
<comment type="subcellular location">
    <subcellularLocation>
        <location evidence="1">Nucleus</location>
    </subcellularLocation>
</comment>
<comment type="domain">
    <text>The Q motif is unique to and characteristic of the DEAD box family of RNA helicases and controls ATP binding and hydrolysis.</text>
</comment>
<comment type="similarity">
    <text evidence="5">Belongs to the DEAD box helicase family. DECD subfamily.</text>
</comment>
<organism>
    <name type="scientific">Aspergillus niger (strain ATCC MYA-4892 / CBS 513.88 / FGSC A1513)</name>
    <dbReference type="NCBI Taxonomy" id="425011"/>
    <lineage>
        <taxon>Eukaryota</taxon>
        <taxon>Fungi</taxon>
        <taxon>Dikarya</taxon>
        <taxon>Ascomycota</taxon>
        <taxon>Pezizomycotina</taxon>
        <taxon>Eurotiomycetes</taxon>
        <taxon>Eurotiomycetidae</taxon>
        <taxon>Eurotiales</taxon>
        <taxon>Aspergillaceae</taxon>
        <taxon>Aspergillus</taxon>
        <taxon>Aspergillus subgen. Circumdati</taxon>
    </lineage>
</organism>
<protein>
    <recommendedName>
        <fullName>ATP-dependent RNA helicase sub2</fullName>
        <ecNumber>3.6.4.13</ecNumber>
    </recommendedName>
</protein>
<accession>A2R0B5</accession>
<gene>
    <name type="primary">sub2</name>
    <name type="ORF">An12g08030</name>
</gene>
<evidence type="ECO:0000250" key="1"/>
<evidence type="ECO:0000255" key="2">
    <source>
        <dbReference type="PROSITE-ProRule" id="PRU00541"/>
    </source>
</evidence>
<evidence type="ECO:0000255" key="3">
    <source>
        <dbReference type="PROSITE-ProRule" id="PRU00542"/>
    </source>
</evidence>
<evidence type="ECO:0000256" key="4">
    <source>
        <dbReference type="SAM" id="MobiDB-lite"/>
    </source>
</evidence>
<evidence type="ECO:0000305" key="5"/>
<dbReference type="EC" id="3.6.4.13"/>
<dbReference type="EMBL" id="AM270283">
    <property type="protein sequence ID" value="CAK41253.1"/>
    <property type="molecule type" value="Genomic_DNA"/>
</dbReference>
<dbReference type="RefSeq" id="XP_001395854.1">
    <property type="nucleotide sequence ID" value="XM_001395817.2"/>
</dbReference>
<dbReference type="SMR" id="A2R0B5"/>
<dbReference type="EnsemblFungi" id="CAK41253">
    <property type="protein sequence ID" value="CAK41253"/>
    <property type="gene ID" value="An12g08030"/>
</dbReference>
<dbReference type="GeneID" id="4986154"/>
<dbReference type="KEGG" id="ang:An12g08030"/>
<dbReference type="VEuPathDB" id="FungiDB:An12g08030"/>
<dbReference type="HOGENOM" id="CLU_003041_1_0_1"/>
<dbReference type="Proteomes" id="UP000006706">
    <property type="component" value="Chromosome 3L"/>
</dbReference>
<dbReference type="GO" id="GO:0000781">
    <property type="term" value="C:chromosome, telomeric region"/>
    <property type="evidence" value="ECO:0007669"/>
    <property type="project" value="EnsemblFungi"/>
</dbReference>
<dbReference type="GO" id="GO:0005681">
    <property type="term" value="C:spliceosomal complex"/>
    <property type="evidence" value="ECO:0007669"/>
    <property type="project" value="UniProtKB-KW"/>
</dbReference>
<dbReference type="GO" id="GO:0000346">
    <property type="term" value="C:transcription export complex"/>
    <property type="evidence" value="ECO:0007669"/>
    <property type="project" value="EnsemblFungi"/>
</dbReference>
<dbReference type="GO" id="GO:0005524">
    <property type="term" value="F:ATP binding"/>
    <property type="evidence" value="ECO:0007669"/>
    <property type="project" value="UniProtKB-KW"/>
</dbReference>
<dbReference type="GO" id="GO:0016887">
    <property type="term" value="F:ATP hydrolysis activity"/>
    <property type="evidence" value="ECO:0007669"/>
    <property type="project" value="RHEA"/>
</dbReference>
<dbReference type="GO" id="GO:0003723">
    <property type="term" value="F:RNA binding"/>
    <property type="evidence" value="ECO:0007669"/>
    <property type="project" value="UniProtKB-KW"/>
</dbReference>
<dbReference type="GO" id="GO:0003724">
    <property type="term" value="F:RNA helicase activity"/>
    <property type="evidence" value="ECO:0007669"/>
    <property type="project" value="UniProtKB-EC"/>
</dbReference>
<dbReference type="GO" id="GO:0031124">
    <property type="term" value="P:mRNA 3'-end processing"/>
    <property type="evidence" value="ECO:0007669"/>
    <property type="project" value="EnsemblFungi"/>
</dbReference>
<dbReference type="GO" id="GO:0006406">
    <property type="term" value="P:mRNA export from nucleus"/>
    <property type="evidence" value="ECO:0007669"/>
    <property type="project" value="EnsemblFungi"/>
</dbReference>
<dbReference type="GO" id="GO:0000398">
    <property type="term" value="P:mRNA splicing, via spliceosome"/>
    <property type="evidence" value="ECO:0007669"/>
    <property type="project" value="EnsemblFungi"/>
</dbReference>
<dbReference type="GO" id="GO:0031509">
    <property type="term" value="P:subtelomeric heterochromatin formation"/>
    <property type="evidence" value="ECO:0007669"/>
    <property type="project" value="EnsemblFungi"/>
</dbReference>
<dbReference type="GO" id="GO:0006368">
    <property type="term" value="P:transcription elongation by RNA polymerase II"/>
    <property type="evidence" value="ECO:0007669"/>
    <property type="project" value="EnsemblFungi"/>
</dbReference>
<dbReference type="GO" id="GO:0006283">
    <property type="term" value="P:transcription-coupled nucleotide-excision repair"/>
    <property type="evidence" value="ECO:0007669"/>
    <property type="project" value="EnsemblFungi"/>
</dbReference>
<dbReference type="CDD" id="cd17950">
    <property type="entry name" value="DEADc_DDX39"/>
    <property type="match status" value="1"/>
</dbReference>
<dbReference type="CDD" id="cd18787">
    <property type="entry name" value="SF2_C_DEAD"/>
    <property type="match status" value="1"/>
</dbReference>
<dbReference type="FunFam" id="3.40.50.300:FF:000111">
    <property type="entry name" value="DEAD-box ATP-dependent RNA helicase"/>
    <property type="match status" value="1"/>
</dbReference>
<dbReference type="FunFam" id="3.40.50.300:FF:000168">
    <property type="entry name" value="DEAD-box ATP-dependent RNA helicase 56-like"/>
    <property type="match status" value="1"/>
</dbReference>
<dbReference type="Gene3D" id="3.40.50.300">
    <property type="entry name" value="P-loop containing nucleotide triphosphate hydrolases"/>
    <property type="match status" value="2"/>
</dbReference>
<dbReference type="InterPro" id="IPR011545">
    <property type="entry name" value="DEAD/DEAH_box_helicase_dom"/>
</dbReference>
<dbReference type="InterPro" id="IPR014001">
    <property type="entry name" value="Helicase_ATP-bd"/>
</dbReference>
<dbReference type="InterPro" id="IPR001650">
    <property type="entry name" value="Helicase_C-like"/>
</dbReference>
<dbReference type="InterPro" id="IPR027417">
    <property type="entry name" value="P-loop_NTPase"/>
</dbReference>
<dbReference type="InterPro" id="IPR014014">
    <property type="entry name" value="RNA_helicase_DEAD_Q_motif"/>
</dbReference>
<dbReference type="PANTHER" id="PTHR47958">
    <property type="entry name" value="ATP-DEPENDENT RNA HELICASE DBP3"/>
    <property type="match status" value="1"/>
</dbReference>
<dbReference type="Pfam" id="PF00270">
    <property type="entry name" value="DEAD"/>
    <property type="match status" value="1"/>
</dbReference>
<dbReference type="Pfam" id="PF00271">
    <property type="entry name" value="Helicase_C"/>
    <property type="match status" value="1"/>
</dbReference>
<dbReference type="SMART" id="SM00487">
    <property type="entry name" value="DEXDc"/>
    <property type="match status" value="1"/>
</dbReference>
<dbReference type="SMART" id="SM00490">
    <property type="entry name" value="HELICc"/>
    <property type="match status" value="1"/>
</dbReference>
<dbReference type="SUPFAM" id="SSF52540">
    <property type="entry name" value="P-loop containing nucleoside triphosphate hydrolases"/>
    <property type="match status" value="1"/>
</dbReference>
<dbReference type="PROSITE" id="PS51192">
    <property type="entry name" value="HELICASE_ATP_BIND_1"/>
    <property type="match status" value="1"/>
</dbReference>
<dbReference type="PROSITE" id="PS51194">
    <property type="entry name" value="HELICASE_CTER"/>
    <property type="match status" value="1"/>
</dbReference>
<dbReference type="PROSITE" id="PS51195">
    <property type="entry name" value="Q_MOTIF"/>
    <property type="match status" value="1"/>
</dbReference>
<keyword id="KW-0067">ATP-binding</keyword>
<keyword id="KW-0347">Helicase</keyword>
<keyword id="KW-0378">Hydrolase</keyword>
<keyword id="KW-0507">mRNA processing</keyword>
<keyword id="KW-0508">mRNA splicing</keyword>
<keyword id="KW-0509">mRNA transport</keyword>
<keyword id="KW-0547">Nucleotide-binding</keyword>
<keyword id="KW-0539">Nucleus</keyword>
<keyword id="KW-1185">Reference proteome</keyword>
<keyword id="KW-0694">RNA-binding</keyword>
<keyword id="KW-0747">Spliceosome</keyword>
<keyword id="KW-0813">Transport</keyword>
<feature type="chain" id="PRO_0000282687" description="ATP-dependent RNA helicase sub2">
    <location>
        <begin position="1"/>
        <end position="440"/>
    </location>
</feature>
<feature type="domain" description="Helicase ATP-binding" evidence="2">
    <location>
        <begin position="88"/>
        <end position="263"/>
    </location>
</feature>
<feature type="domain" description="Helicase C-terminal" evidence="3">
    <location>
        <begin position="291"/>
        <end position="436"/>
    </location>
</feature>
<feature type="region of interest" description="Disordered" evidence="4">
    <location>
        <begin position="1"/>
        <end position="42"/>
    </location>
</feature>
<feature type="short sequence motif" description="Q motif">
    <location>
        <begin position="57"/>
        <end position="85"/>
    </location>
</feature>
<feature type="short sequence motif" description="DEAD box">
    <location>
        <begin position="210"/>
        <end position="213"/>
    </location>
</feature>
<feature type="compositionally biased region" description="Acidic residues" evidence="4">
    <location>
        <begin position="1"/>
        <end position="16"/>
    </location>
</feature>
<feature type="compositionally biased region" description="Low complexity" evidence="4">
    <location>
        <begin position="17"/>
        <end position="28"/>
    </location>
</feature>
<feature type="binding site" evidence="2">
    <location>
        <begin position="101"/>
        <end position="108"/>
    </location>
    <ligand>
        <name>ATP</name>
        <dbReference type="ChEBI" id="CHEBI:30616"/>
    </ligand>
</feature>
<proteinExistence type="inferred from homology"/>
<name>SUB2_ASPNC</name>